<keyword id="KW-0004">4Fe-4S</keyword>
<keyword id="KW-0408">Iron</keyword>
<keyword id="KW-0411">Iron-sulfur</keyword>
<keyword id="KW-0456">Lyase</keyword>
<keyword id="KW-0479">Metal-binding</keyword>
<keyword id="KW-0949">S-adenosyl-L-methionine</keyword>
<keyword id="KW-0784">Thiamine biosynthesis</keyword>
<keyword id="KW-0862">Zinc</keyword>
<evidence type="ECO:0000255" key="1">
    <source>
        <dbReference type="HAMAP-Rule" id="MF_00089"/>
    </source>
</evidence>
<sequence>MNANPKFLSATATVDEASIQPLPNSRKIYIEGSRPDIRVPMREITQSDTAASFGFEKNPPIYVYDTSGPYTDPAAKIDIRSGLDTPRLPWILERNDTEELPGPTSEYGIERLNDPKLAELRFNLHRKPRRALAGKNVSQMHYARQGIITPEMEFVAIRENMNRRAYLEELKKSGPKGEKLAELMGRQHPGQSFGAAIPQEITAEFVRSEIARGRAIIPANINHPEIEPMIIGRNFLVKINANIGNSAVTSSIGEEVEKMTWAIRWGGDNVMDLSTGKHIHETREWIIRNSPVPIGTVPIYQALEKVNGKAEDLTWEIFRDTLIEQAEQGVDYFTIHAGVLLRYVPMTAKRMTGIVSRGGSIMAKWCLAHHKESFLYEHFEDICEIMKAYDVSFSLGDGLRPGSIYDANDEAQLGELKTLGELTQIAWKHDVQVMIEGPGHVPMHLIKENMDLQLEQCHEAPFYTLGPLTTDIAPGYDHITSGIGAAQIGWYGTAMLCYVTPKEHLGLPNKVDVKDGIITYKIAAHAADLAKGHIGAQIRDNALSKARFEFRWEDQFNIGLDPDKAREFHDETLPKDSAKVAHFCSMCGPHFCSMKITQEVRDYAAKQGITEIQALKAGMEVKAIEFVKSGSEIYQKQ</sequence>
<reference key="1">
    <citation type="journal article" date="2007" name="PLoS Genet.">
        <title>Genome analysis of Minibacterium massiliensis highlights the convergent evolution of water-living bacteria.</title>
        <authorList>
            <person name="Audic S."/>
            <person name="Robert C."/>
            <person name="Campagna B."/>
            <person name="Parinello H."/>
            <person name="Claverie J.-M."/>
            <person name="Raoult D."/>
            <person name="Drancourt M."/>
        </authorList>
    </citation>
    <scope>NUCLEOTIDE SEQUENCE [LARGE SCALE GENOMIC DNA]</scope>
    <source>
        <strain>Marseille</strain>
    </source>
</reference>
<gene>
    <name evidence="1" type="primary">thiC</name>
    <name type="ordered locus">mma_0384</name>
</gene>
<dbReference type="EC" id="4.1.99.17" evidence="1"/>
<dbReference type="EMBL" id="CP000269">
    <property type="protein sequence ID" value="ABR88562.1"/>
    <property type="molecule type" value="Genomic_DNA"/>
</dbReference>
<dbReference type="RefSeq" id="WP_012078249.1">
    <property type="nucleotide sequence ID" value="NC_009659.1"/>
</dbReference>
<dbReference type="SMR" id="A6SUX7"/>
<dbReference type="STRING" id="375286.mma_0384"/>
<dbReference type="KEGG" id="mms:mma_0384"/>
<dbReference type="eggNOG" id="COG0422">
    <property type="taxonomic scope" value="Bacteria"/>
</dbReference>
<dbReference type="HOGENOM" id="CLU_013181_2_1_4"/>
<dbReference type="OrthoDB" id="9805897at2"/>
<dbReference type="UniPathway" id="UPA00060"/>
<dbReference type="Proteomes" id="UP000006388">
    <property type="component" value="Chromosome"/>
</dbReference>
<dbReference type="GO" id="GO:0005829">
    <property type="term" value="C:cytosol"/>
    <property type="evidence" value="ECO:0007669"/>
    <property type="project" value="TreeGrafter"/>
</dbReference>
<dbReference type="GO" id="GO:0051539">
    <property type="term" value="F:4 iron, 4 sulfur cluster binding"/>
    <property type="evidence" value="ECO:0007669"/>
    <property type="project" value="UniProtKB-KW"/>
</dbReference>
<dbReference type="GO" id="GO:0016830">
    <property type="term" value="F:carbon-carbon lyase activity"/>
    <property type="evidence" value="ECO:0007669"/>
    <property type="project" value="InterPro"/>
</dbReference>
<dbReference type="GO" id="GO:0008270">
    <property type="term" value="F:zinc ion binding"/>
    <property type="evidence" value="ECO:0007669"/>
    <property type="project" value="UniProtKB-UniRule"/>
</dbReference>
<dbReference type="GO" id="GO:0009228">
    <property type="term" value="P:thiamine biosynthetic process"/>
    <property type="evidence" value="ECO:0007669"/>
    <property type="project" value="UniProtKB-KW"/>
</dbReference>
<dbReference type="GO" id="GO:0009229">
    <property type="term" value="P:thiamine diphosphate biosynthetic process"/>
    <property type="evidence" value="ECO:0007669"/>
    <property type="project" value="UniProtKB-UniRule"/>
</dbReference>
<dbReference type="FunFam" id="3.20.20.540:FF:000001">
    <property type="entry name" value="Phosphomethylpyrimidine synthase"/>
    <property type="match status" value="1"/>
</dbReference>
<dbReference type="Gene3D" id="6.10.250.620">
    <property type="match status" value="1"/>
</dbReference>
<dbReference type="Gene3D" id="3.20.20.540">
    <property type="entry name" value="Radical SAM ThiC family, central domain"/>
    <property type="match status" value="1"/>
</dbReference>
<dbReference type="HAMAP" id="MF_00089">
    <property type="entry name" value="ThiC"/>
    <property type="match status" value="1"/>
</dbReference>
<dbReference type="InterPro" id="IPR037509">
    <property type="entry name" value="ThiC"/>
</dbReference>
<dbReference type="InterPro" id="IPR025747">
    <property type="entry name" value="ThiC-associated_dom"/>
</dbReference>
<dbReference type="InterPro" id="IPR038521">
    <property type="entry name" value="ThiC/Bza_core_dom"/>
</dbReference>
<dbReference type="InterPro" id="IPR002817">
    <property type="entry name" value="ThiC/BzaA/B"/>
</dbReference>
<dbReference type="NCBIfam" id="NF006763">
    <property type="entry name" value="PRK09284.1"/>
    <property type="match status" value="1"/>
</dbReference>
<dbReference type="NCBIfam" id="NF009895">
    <property type="entry name" value="PRK13352.1"/>
    <property type="match status" value="1"/>
</dbReference>
<dbReference type="NCBIfam" id="TIGR00190">
    <property type="entry name" value="thiC"/>
    <property type="match status" value="1"/>
</dbReference>
<dbReference type="PANTHER" id="PTHR30557:SF1">
    <property type="entry name" value="PHOSPHOMETHYLPYRIMIDINE SYNTHASE, CHLOROPLASTIC"/>
    <property type="match status" value="1"/>
</dbReference>
<dbReference type="PANTHER" id="PTHR30557">
    <property type="entry name" value="THIAMINE BIOSYNTHESIS PROTEIN THIC"/>
    <property type="match status" value="1"/>
</dbReference>
<dbReference type="Pfam" id="PF13667">
    <property type="entry name" value="ThiC-associated"/>
    <property type="match status" value="1"/>
</dbReference>
<dbReference type="Pfam" id="PF01964">
    <property type="entry name" value="ThiC_Rad_SAM"/>
    <property type="match status" value="1"/>
</dbReference>
<dbReference type="SFLD" id="SFLDF00407">
    <property type="entry name" value="phosphomethylpyrimidine_syntha"/>
    <property type="match status" value="1"/>
</dbReference>
<dbReference type="SFLD" id="SFLDG01114">
    <property type="entry name" value="phosphomethylpyrimidine_syntha"/>
    <property type="match status" value="1"/>
</dbReference>
<dbReference type="SFLD" id="SFLDS00113">
    <property type="entry name" value="Radical_SAM_Phosphomethylpyrim"/>
    <property type="match status" value="1"/>
</dbReference>
<feature type="chain" id="PRO_1000004764" description="Phosphomethylpyrimidine synthase">
    <location>
        <begin position="1"/>
        <end position="637"/>
    </location>
</feature>
<feature type="binding site" evidence="1">
    <location>
        <position position="242"/>
    </location>
    <ligand>
        <name>substrate</name>
    </ligand>
</feature>
<feature type="binding site" evidence="1">
    <location>
        <position position="271"/>
    </location>
    <ligand>
        <name>substrate</name>
    </ligand>
</feature>
<feature type="binding site" evidence="1">
    <location>
        <position position="300"/>
    </location>
    <ligand>
        <name>substrate</name>
    </ligand>
</feature>
<feature type="binding site" evidence="1">
    <location>
        <position position="336"/>
    </location>
    <ligand>
        <name>substrate</name>
    </ligand>
</feature>
<feature type="binding site" evidence="1">
    <location>
        <begin position="356"/>
        <end position="358"/>
    </location>
    <ligand>
        <name>substrate</name>
    </ligand>
</feature>
<feature type="binding site" evidence="1">
    <location>
        <begin position="397"/>
        <end position="400"/>
    </location>
    <ligand>
        <name>substrate</name>
    </ligand>
</feature>
<feature type="binding site" evidence="1">
    <location>
        <position position="436"/>
    </location>
    <ligand>
        <name>substrate</name>
    </ligand>
</feature>
<feature type="binding site" evidence="1">
    <location>
        <position position="440"/>
    </location>
    <ligand>
        <name>Zn(2+)</name>
        <dbReference type="ChEBI" id="CHEBI:29105"/>
    </ligand>
</feature>
<feature type="binding site" evidence="1">
    <location>
        <position position="463"/>
    </location>
    <ligand>
        <name>substrate</name>
    </ligand>
</feature>
<feature type="binding site" evidence="1">
    <location>
        <position position="504"/>
    </location>
    <ligand>
        <name>Zn(2+)</name>
        <dbReference type="ChEBI" id="CHEBI:29105"/>
    </ligand>
</feature>
<feature type="binding site" evidence="1">
    <location>
        <position position="584"/>
    </location>
    <ligand>
        <name>[4Fe-4S] cluster</name>
        <dbReference type="ChEBI" id="CHEBI:49883"/>
        <note>4Fe-4S-S-AdoMet</note>
    </ligand>
</feature>
<feature type="binding site" evidence="1">
    <location>
        <position position="587"/>
    </location>
    <ligand>
        <name>[4Fe-4S] cluster</name>
        <dbReference type="ChEBI" id="CHEBI:49883"/>
        <note>4Fe-4S-S-AdoMet</note>
    </ligand>
</feature>
<feature type="binding site" evidence="1">
    <location>
        <position position="592"/>
    </location>
    <ligand>
        <name>[4Fe-4S] cluster</name>
        <dbReference type="ChEBI" id="CHEBI:49883"/>
        <note>4Fe-4S-S-AdoMet</note>
    </ligand>
</feature>
<accession>A6SUX7</accession>
<comment type="function">
    <text evidence="1">Catalyzes the synthesis of the hydroxymethylpyrimidine phosphate (HMP-P) moiety of thiamine from aminoimidazole ribotide (AIR) in a radical S-adenosyl-L-methionine (SAM)-dependent reaction.</text>
</comment>
<comment type="catalytic activity">
    <reaction evidence="1">
        <text>5-amino-1-(5-phospho-beta-D-ribosyl)imidazole + S-adenosyl-L-methionine = 4-amino-2-methyl-5-(phosphooxymethyl)pyrimidine + CO + 5'-deoxyadenosine + formate + L-methionine + 3 H(+)</text>
        <dbReference type="Rhea" id="RHEA:24840"/>
        <dbReference type="ChEBI" id="CHEBI:15378"/>
        <dbReference type="ChEBI" id="CHEBI:15740"/>
        <dbReference type="ChEBI" id="CHEBI:17245"/>
        <dbReference type="ChEBI" id="CHEBI:17319"/>
        <dbReference type="ChEBI" id="CHEBI:57844"/>
        <dbReference type="ChEBI" id="CHEBI:58354"/>
        <dbReference type="ChEBI" id="CHEBI:59789"/>
        <dbReference type="ChEBI" id="CHEBI:137981"/>
        <dbReference type="EC" id="4.1.99.17"/>
    </reaction>
</comment>
<comment type="cofactor">
    <cofactor evidence="1">
        <name>[4Fe-4S] cluster</name>
        <dbReference type="ChEBI" id="CHEBI:49883"/>
    </cofactor>
    <text evidence="1">Binds 1 [4Fe-4S] cluster per subunit. The cluster is coordinated with 3 cysteines and an exchangeable S-adenosyl-L-methionine.</text>
</comment>
<comment type="pathway">
    <text evidence="1">Cofactor biosynthesis; thiamine diphosphate biosynthesis.</text>
</comment>
<comment type="subunit">
    <text evidence="1">Homodimer.</text>
</comment>
<comment type="similarity">
    <text evidence="1">Belongs to the ThiC family.</text>
</comment>
<organism>
    <name type="scientific">Janthinobacterium sp. (strain Marseille)</name>
    <name type="common">Minibacterium massiliensis</name>
    <dbReference type="NCBI Taxonomy" id="375286"/>
    <lineage>
        <taxon>Bacteria</taxon>
        <taxon>Pseudomonadati</taxon>
        <taxon>Pseudomonadota</taxon>
        <taxon>Betaproteobacteria</taxon>
        <taxon>Burkholderiales</taxon>
        <taxon>Oxalobacteraceae</taxon>
        <taxon>Janthinobacterium</taxon>
    </lineage>
</organism>
<protein>
    <recommendedName>
        <fullName evidence="1">Phosphomethylpyrimidine synthase</fullName>
        <ecNumber evidence="1">4.1.99.17</ecNumber>
    </recommendedName>
    <alternativeName>
        <fullName evidence="1">Hydroxymethylpyrimidine phosphate synthase</fullName>
        <shortName evidence="1">HMP-P synthase</shortName>
        <shortName evidence="1">HMP-phosphate synthase</shortName>
        <shortName evidence="1">HMPP synthase</shortName>
    </alternativeName>
    <alternativeName>
        <fullName evidence="1">Thiamine biosynthesis protein ThiC</fullName>
    </alternativeName>
</protein>
<name>THIC_JANMA</name>
<proteinExistence type="inferred from homology"/>